<feature type="chain" id="PRO_1000020333" description="Threonine--tRNA ligase">
    <location>
        <begin position="1"/>
        <end position="642"/>
    </location>
</feature>
<feature type="domain" description="TGS" evidence="2">
    <location>
        <begin position="1"/>
        <end position="61"/>
    </location>
</feature>
<feature type="region of interest" description="Catalytic" evidence="1">
    <location>
        <begin position="243"/>
        <end position="534"/>
    </location>
</feature>
<feature type="binding site" evidence="1">
    <location>
        <position position="334"/>
    </location>
    <ligand>
        <name>Zn(2+)</name>
        <dbReference type="ChEBI" id="CHEBI:29105"/>
    </ligand>
</feature>
<feature type="binding site" evidence="1">
    <location>
        <position position="385"/>
    </location>
    <ligand>
        <name>Zn(2+)</name>
        <dbReference type="ChEBI" id="CHEBI:29105"/>
    </ligand>
</feature>
<feature type="binding site" evidence="1">
    <location>
        <position position="511"/>
    </location>
    <ligand>
        <name>Zn(2+)</name>
        <dbReference type="ChEBI" id="CHEBI:29105"/>
    </ligand>
</feature>
<keyword id="KW-0030">Aminoacyl-tRNA synthetase</keyword>
<keyword id="KW-0067">ATP-binding</keyword>
<keyword id="KW-0963">Cytoplasm</keyword>
<keyword id="KW-0436">Ligase</keyword>
<keyword id="KW-0479">Metal-binding</keyword>
<keyword id="KW-0547">Nucleotide-binding</keyword>
<keyword id="KW-0648">Protein biosynthesis</keyword>
<keyword id="KW-1185">Reference proteome</keyword>
<keyword id="KW-0694">RNA-binding</keyword>
<keyword id="KW-0820">tRNA-binding</keyword>
<keyword id="KW-0862">Zinc</keyword>
<name>SYT_AERHH</name>
<gene>
    <name evidence="1" type="primary">thrS</name>
    <name type="ordered locus">AHA_2327</name>
</gene>
<proteinExistence type="inferred from homology"/>
<comment type="function">
    <text evidence="1">Catalyzes the attachment of threonine to tRNA(Thr) in a two-step reaction: L-threonine is first activated by ATP to form Thr-AMP and then transferred to the acceptor end of tRNA(Thr). Also edits incorrectly charged L-seryl-tRNA(Thr).</text>
</comment>
<comment type="catalytic activity">
    <reaction evidence="1">
        <text>tRNA(Thr) + L-threonine + ATP = L-threonyl-tRNA(Thr) + AMP + diphosphate + H(+)</text>
        <dbReference type="Rhea" id="RHEA:24624"/>
        <dbReference type="Rhea" id="RHEA-COMP:9670"/>
        <dbReference type="Rhea" id="RHEA-COMP:9704"/>
        <dbReference type="ChEBI" id="CHEBI:15378"/>
        <dbReference type="ChEBI" id="CHEBI:30616"/>
        <dbReference type="ChEBI" id="CHEBI:33019"/>
        <dbReference type="ChEBI" id="CHEBI:57926"/>
        <dbReference type="ChEBI" id="CHEBI:78442"/>
        <dbReference type="ChEBI" id="CHEBI:78534"/>
        <dbReference type="ChEBI" id="CHEBI:456215"/>
        <dbReference type="EC" id="6.1.1.3"/>
    </reaction>
</comment>
<comment type="cofactor">
    <cofactor evidence="1">
        <name>Zn(2+)</name>
        <dbReference type="ChEBI" id="CHEBI:29105"/>
    </cofactor>
    <text evidence="1">Binds 1 zinc ion per subunit.</text>
</comment>
<comment type="subunit">
    <text evidence="1">Homodimer.</text>
</comment>
<comment type="subcellular location">
    <subcellularLocation>
        <location evidence="1">Cytoplasm</location>
    </subcellularLocation>
</comment>
<comment type="similarity">
    <text evidence="1">Belongs to the class-II aminoacyl-tRNA synthetase family.</text>
</comment>
<accession>A0KKP9</accession>
<dbReference type="EC" id="6.1.1.3" evidence="1"/>
<dbReference type="EMBL" id="CP000462">
    <property type="protein sequence ID" value="ABK39536.1"/>
    <property type="molecule type" value="Genomic_DNA"/>
</dbReference>
<dbReference type="RefSeq" id="WP_011706169.1">
    <property type="nucleotide sequence ID" value="NC_008570.1"/>
</dbReference>
<dbReference type="RefSeq" id="YP_856850.1">
    <property type="nucleotide sequence ID" value="NC_008570.1"/>
</dbReference>
<dbReference type="SMR" id="A0KKP9"/>
<dbReference type="STRING" id="380703.AHA_2327"/>
<dbReference type="EnsemblBacteria" id="ABK39536">
    <property type="protein sequence ID" value="ABK39536"/>
    <property type="gene ID" value="AHA_2327"/>
</dbReference>
<dbReference type="GeneID" id="4489756"/>
<dbReference type="KEGG" id="aha:AHA_2327"/>
<dbReference type="PATRIC" id="fig|380703.7.peg.2328"/>
<dbReference type="eggNOG" id="COG0441">
    <property type="taxonomic scope" value="Bacteria"/>
</dbReference>
<dbReference type="HOGENOM" id="CLU_008554_0_1_6"/>
<dbReference type="OrthoDB" id="9802304at2"/>
<dbReference type="Proteomes" id="UP000000756">
    <property type="component" value="Chromosome"/>
</dbReference>
<dbReference type="GO" id="GO:0005829">
    <property type="term" value="C:cytosol"/>
    <property type="evidence" value="ECO:0007669"/>
    <property type="project" value="TreeGrafter"/>
</dbReference>
<dbReference type="GO" id="GO:0005524">
    <property type="term" value="F:ATP binding"/>
    <property type="evidence" value="ECO:0007669"/>
    <property type="project" value="UniProtKB-UniRule"/>
</dbReference>
<dbReference type="GO" id="GO:0046872">
    <property type="term" value="F:metal ion binding"/>
    <property type="evidence" value="ECO:0007669"/>
    <property type="project" value="UniProtKB-KW"/>
</dbReference>
<dbReference type="GO" id="GO:0004829">
    <property type="term" value="F:threonine-tRNA ligase activity"/>
    <property type="evidence" value="ECO:0007669"/>
    <property type="project" value="UniProtKB-UniRule"/>
</dbReference>
<dbReference type="GO" id="GO:0000049">
    <property type="term" value="F:tRNA binding"/>
    <property type="evidence" value="ECO:0007669"/>
    <property type="project" value="UniProtKB-KW"/>
</dbReference>
<dbReference type="GO" id="GO:0006435">
    <property type="term" value="P:threonyl-tRNA aminoacylation"/>
    <property type="evidence" value="ECO:0007669"/>
    <property type="project" value="UniProtKB-UniRule"/>
</dbReference>
<dbReference type="CDD" id="cd01667">
    <property type="entry name" value="TGS_ThrRS"/>
    <property type="match status" value="1"/>
</dbReference>
<dbReference type="CDD" id="cd00860">
    <property type="entry name" value="ThrRS_anticodon"/>
    <property type="match status" value="1"/>
</dbReference>
<dbReference type="CDD" id="cd00771">
    <property type="entry name" value="ThrRS_core"/>
    <property type="match status" value="1"/>
</dbReference>
<dbReference type="FunFam" id="3.10.20.30:FF:000005">
    <property type="entry name" value="Threonine--tRNA ligase"/>
    <property type="match status" value="1"/>
</dbReference>
<dbReference type="FunFam" id="3.30.54.20:FF:000002">
    <property type="entry name" value="Threonine--tRNA ligase"/>
    <property type="match status" value="1"/>
</dbReference>
<dbReference type="FunFam" id="3.30.930.10:FF:000002">
    <property type="entry name" value="Threonine--tRNA ligase"/>
    <property type="match status" value="1"/>
</dbReference>
<dbReference type="FunFam" id="3.40.50.800:FF:000001">
    <property type="entry name" value="Threonine--tRNA ligase"/>
    <property type="match status" value="1"/>
</dbReference>
<dbReference type="FunFam" id="3.30.980.10:FF:000005">
    <property type="entry name" value="Threonyl-tRNA synthetase, mitochondrial"/>
    <property type="match status" value="1"/>
</dbReference>
<dbReference type="Gene3D" id="3.10.20.30">
    <property type="match status" value="1"/>
</dbReference>
<dbReference type="Gene3D" id="3.30.54.20">
    <property type="match status" value="1"/>
</dbReference>
<dbReference type="Gene3D" id="3.40.50.800">
    <property type="entry name" value="Anticodon-binding domain"/>
    <property type="match status" value="1"/>
</dbReference>
<dbReference type="Gene3D" id="3.30.930.10">
    <property type="entry name" value="Bira Bifunctional Protein, Domain 2"/>
    <property type="match status" value="1"/>
</dbReference>
<dbReference type="Gene3D" id="3.30.980.10">
    <property type="entry name" value="Threonyl-trna Synthetase, Chain A, domain 2"/>
    <property type="match status" value="1"/>
</dbReference>
<dbReference type="HAMAP" id="MF_00184">
    <property type="entry name" value="Thr_tRNA_synth"/>
    <property type="match status" value="1"/>
</dbReference>
<dbReference type="InterPro" id="IPR002314">
    <property type="entry name" value="aa-tRNA-synt_IIb"/>
</dbReference>
<dbReference type="InterPro" id="IPR006195">
    <property type="entry name" value="aa-tRNA-synth_II"/>
</dbReference>
<dbReference type="InterPro" id="IPR045864">
    <property type="entry name" value="aa-tRNA-synth_II/BPL/LPL"/>
</dbReference>
<dbReference type="InterPro" id="IPR004154">
    <property type="entry name" value="Anticodon-bd"/>
</dbReference>
<dbReference type="InterPro" id="IPR036621">
    <property type="entry name" value="Anticodon-bd_dom_sf"/>
</dbReference>
<dbReference type="InterPro" id="IPR012675">
    <property type="entry name" value="Beta-grasp_dom_sf"/>
</dbReference>
<dbReference type="InterPro" id="IPR004095">
    <property type="entry name" value="TGS"/>
</dbReference>
<dbReference type="InterPro" id="IPR012676">
    <property type="entry name" value="TGS-like"/>
</dbReference>
<dbReference type="InterPro" id="IPR002320">
    <property type="entry name" value="Thr-tRNA-ligase_IIa"/>
</dbReference>
<dbReference type="InterPro" id="IPR018163">
    <property type="entry name" value="Thr/Ala-tRNA-synth_IIc_edit"/>
</dbReference>
<dbReference type="InterPro" id="IPR047246">
    <property type="entry name" value="ThrRS_anticodon"/>
</dbReference>
<dbReference type="InterPro" id="IPR033728">
    <property type="entry name" value="ThrRS_core"/>
</dbReference>
<dbReference type="InterPro" id="IPR012947">
    <property type="entry name" value="tRNA_SAD"/>
</dbReference>
<dbReference type="NCBIfam" id="TIGR00418">
    <property type="entry name" value="thrS"/>
    <property type="match status" value="1"/>
</dbReference>
<dbReference type="PANTHER" id="PTHR11451:SF44">
    <property type="entry name" value="THREONINE--TRNA LIGASE, CHLOROPLASTIC_MITOCHONDRIAL 2"/>
    <property type="match status" value="1"/>
</dbReference>
<dbReference type="PANTHER" id="PTHR11451">
    <property type="entry name" value="THREONINE-TRNA LIGASE"/>
    <property type="match status" value="1"/>
</dbReference>
<dbReference type="Pfam" id="PF03129">
    <property type="entry name" value="HGTP_anticodon"/>
    <property type="match status" value="1"/>
</dbReference>
<dbReference type="Pfam" id="PF02824">
    <property type="entry name" value="TGS"/>
    <property type="match status" value="1"/>
</dbReference>
<dbReference type="Pfam" id="PF00587">
    <property type="entry name" value="tRNA-synt_2b"/>
    <property type="match status" value="1"/>
</dbReference>
<dbReference type="Pfam" id="PF07973">
    <property type="entry name" value="tRNA_SAD"/>
    <property type="match status" value="1"/>
</dbReference>
<dbReference type="PRINTS" id="PR01047">
    <property type="entry name" value="TRNASYNTHTHR"/>
</dbReference>
<dbReference type="SMART" id="SM00863">
    <property type="entry name" value="tRNA_SAD"/>
    <property type="match status" value="1"/>
</dbReference>
<dbReference type="SUPFAM" id="SSF52954">
    <property type="entry name" value="Class II aaRS ABD-related"/>
    <property type="match status" value="1"/>
</dbReference>
<dbReference type="SUPFAM" id="SSF55681">
    <property type="entry name" value="Class II aaRS and biotin synthetases"/>
    <property type="match status" value="1"/>
</dbReference>
<dbReference type="SUPFAM" id="SSF81271">
    <property type="entry name" value="TGS-like"/>
    <property type="match status" value="1"/>
</dbReference>
<dbReference type="SUPFAM" id="SSF55186">
    <property type="entry name" value="ThrRS/AlaRS common domain"/>
    <property type="match status" value="1"/>
</dbReference>
<dbReference type="PROSITE" id="PS50862">
    <property type="entry name" value="AA_TRNA_LIGASE_II"/>
    <property type="match status" value="1"/>
</dbReference>
<dbReference type="PROSITE" id="PS51880">
    <property type="entry name" value="TGS"/>
    <property type="match status" value="1"/>
</dbReference>
<evidence type="ECO:0000255" key="1">
    <source>
        <dbReference type="HAMAP-Rule" id="MF_00184"/>
    </source>
</evidence>
<evidence type="ECO:0000255" key="2">
    <source>
        <dbReference type="PROSITE-ProRule" id="PRU01228"/>
    </source>
</evidence>
<organism>
    <name type="scientific">Aeromonas hydrophila subsp. hydrophila (strain ATCC 7966 / DSM 30187 / BCRC 13018 / CCUG 14551 / JCM 1027 / KCTC 2358 / NCIMB 9240 / NCTC 8049)</name>
    <dbReference type="NCBI Taxonomy" id="380703"/>
    <lineage>
        <taxon>Bacteria</taxon>
        <taxon>Pseudomonadati</taxon>
        <taxon>Pseudomonadota</taxon>
        <taxon>Gammaproteobacteria</taxon>
        <taxon>Aeromonadales</taxon>
        <taxon>Aeromonadaceae</taxon>
        <taxon>Aeromonas</taxon>
    </lineage>
</organism>
<protein>
    <recommendedName>
        <fullName evidence="1">Threonine--tRNA ligase</fullName>
        <ecNumber evidence="1">6.1.1.3</ecNumber>
    </recommendedName>
    <alternativeName>
        <fullName evidence="1">Threonyl-tRNA synthetase</fullName>
        <shortName evidence="1">ThrRS</shortName>
    </alternativeName>
</protein>
<sequence>MPIITLPDGSQRQFAHAVSVMDVAADIGPGLAKACIAGRVNGELVDACELIEADASLAIITAKDEEGLDILRHSCAHLLGHAIKQLWPQTKMAIGPVIDNGFYYDIDLDRTLTDEDLAALEERMLALAAKDYDVIKKKVSWQEARDVFEARGETYKVEILDQNIARDDQPGLYHHEEYIDMCRGPHVPNMRHCHHFKLQKMSGAYWRGDSNNKMLQRIYGTAWADKKQLKSYLQRLEEAAKRDHRKIGKQLDLYHMQEEAPGMVFWHNDGWTIFRELETFIRGKLKEYDYQEVKGPFMMDRVLWERSGHWEKYAQAMFTTQSENREYAIKPMNCPGHVQIFNQGLKSYRDLPLRMAEFGSCHRNEPSGSLHGLMRVRGFTQDDAHIFCTEEQIMEEVSACIRMVYDVYGTFGFENIVVKLSTRPEQRIGSDEAWDRAEAALAEALVLNGLKYDLQPGEGAFYGPKIEFTLHDCLDRAWQCGTVQLDFALPGRLGATYVGEDNERHVPVMIHRAILGSLERFIGILTEEYAGLFPTWLAPTQAVVMNITDNQADYAVKVAKALNDAGLRAKADLRNEKIGFKIREHTLKRVPFMLVCGDKEVEAGKIAVRTRKGADLGTYPVEELIALLTQEVQTRGQKKVEE</sequence>
<reference key="1">
    <citation type="journal article" date="2006" name="J. Bacteriol.">
        <title>Genome sequence of Aeromonas hydrophila ATCC 7966T: jack of all trades.</title>
        <authorList>
            <person name="Seshadri R."/>
            <person name="Joseph S.W."/>
            <person name="Chopra A.K."/>
            <person name="Sha J."/>
            <person name="Shaw J."/>
            <person name="Graf J."/>
            <person name="Haft D.H."/>
            <person name="Wu M."/>
            <person name="Ren Q."/>
            <person name="Rosovitz M.J."/>
            <person name="Madupu R."/>
            <person name="Tallon L."/>
            <person name="Kim M."/>
            <person name="Jin S."/>
            <person name="Vuong H."/>
            <person name="Stine O.C."/>
            <person name="Ali A."/>
            <person name="Horneman A.J."/>
            <person name="Heidelberg J.F."/>
        </authorList>
    </citation>
    <scope>NUCLEOTIDE SEQUENCE [LARGE SCALE GENOMIC DNA]</scope>
    <source>
        <strain>ATCC 7966 / DSM 30187 / BCRC 13018 / CCUG 14551 / JCM 1027 / KCTC 2358 / NCIMB 9240 / NCTC 8049</strain>
    </source>
</reference>